<sequence length="227" mass="24718">MMLHIPQVLSKAKVAELRALIDAAPWVDGNETSGTQSALAKRNAQLPEGSPAATQAGEAILDALERNPLFVAAALPQVVFPPLFNRYAGGEAFGLHVDNSIRQSRDGRTRIRSDLSATLFLTEPEDYDGGVLVVEDTFGAHEVKLPAGDMILYPASSLHEVTPVTRGARVCSFFWIQSLVREDARRELLFQMDLAIQQLGARIGADAPELVSLTGGYHNLLRMWAEV</sequence>
<dbReference type="EC" id="1.14.11.-" evidence="1"/>
<dbReference type="EMBL" id="CP000747">
    <property type="protein sequence ID" value="ACG76706.1"/>
    <property type="molecule type" value="Genomic_DNA"/>
</dbReference>
<dbReference type="RefSeq" id="WP_012520854.1">
    <property type="nucleotide sequence ID" value="NC_011144.1"/>
</dbReference>
<dbReference type="SMR" id="B4RDA2"/>
<dbReference type="STRING" id="450851.PHZ_c0292"/>
<dbReference type="KEGG" id="pzu:PHZ_c0292"/>
<dbReference type="eggNOG" id="COG3128">
    <property type="taxonomic scope" value="Bacteria"/>
</dbReference>
<dbReference type="HOGENOM" id="CLU_106663_0_0_5"/>
<dbReference type="OrthoDB" id="9812472at2"/>
<dbReference type="Proteomes" id="UP000001868">
    <property type="component" value="Chromosome"/>
</dbReference>
<dbReference type="GO" id="GO:0016706">
    <property type="term" value="F:2-oxoglutarate-dependent dioxygenase activity"/>
    <property type="evidence" value="ECO:0007669"/>
    <property type="project" value="UniProtKB-UniRule"/>
</dbReference>
<dbReference type="GO" id="GO:0005506">
    <property type="term" value="F:iron ion binding"/>
    <property type="evidence" value="ECO:0007669"/>
    <property type="project" value="UniProtKB-UniRule"/>
</dbReference>
<dbReference type="GO" id="GO:0031418">
    <property type="term" value="F:L-ascorbic acid binding"/>
    <property type="evidence" value="ECO:0007669"/>
    <property type="project" value="UniProtKB-KW"/>
</dbReference>
<dbReference type="GO" id="GO:0006974">
    <property type="term" value="P:DNA damage response"/>
    <property type="evidence" value="ECO:0007669"/>
    <property type="project" value="TreeGrafter"/>
</dbReference>
<dbReference type="GO" id="GO:0006879">
    <property type="term" value="P:intracellular iron ion homeostasis"/>
    <property type="evidence" value="ECO:0007669"/>
    <property type="project" value="TreeGrafter"/>
</dbReference>
<dbReference type="Gene3D" id="2.60.120.620">
    <property type="entry name" value="q2cbj1_9rhob like domain"/>
    <property type="match status" value="1"/>
</dbReference>
<dbReference type="Gene3D" id="4.10.860.20">
    <property type="entry name" value="Rabenosyn, Rab binding domain"/>
    <property type="match status" value="1"/>
</dbReference>
<dbReference type="HAMAP" id="MF_00657">
    <property type="entry name" value="Hydroxyl_YbiX"/>
    <property type="match status" value="1"/>
</dbReference>
<dbReference type="InterPro" id="IPR005123">
    <property type="entry name" value="Oxoglu/Fe-dep_dioxygenase_dom"/>
</dbReference>
<dbReference type="InterPro" id="IPR041097">
    <property type="entry name" value="PKHD_C"/>
</dbReference>
<dbReference type="InterPro" id="IPR023550">
    <property type="entry name" value="PKHD_hydroxylase"/>
</dbReference>
<dbReference type="InterPro" id="IPR006620">
    <property type="entry name" value="Pro_4_hyd_alph"/>
</dbReference>
<dbReference type="InterPro" id="IPR044862">
    <property type="entry name" value="Pro_4_hyd_alph_FE2OG_OXY"/>
</dbReference>
<dbReference type="NCBIfam" id="NF003973">
    <property type="entry name" value="PRK05467.1-2"/>
    <property type="match status" value="1"/>
</dbReference>
<dbReference type="NCBIfam" id="NF003974">
    <property type="entry name" value="PRK05467.1-3"/>
    <property type="match status" value="1"/>
</dbReference>
<dbReference type="NCBIfam" id="NF003975">
    <property type="entry name" value="PRK05467.1-4"/>
    <property type="match status" value="1"/>
</dbReference>
<dbReference type="PANTHER" id="PTHR41536">
    <property type="entry name" value="PKHD-TYPE HYDROXYLASE YBIX"/>
    <property type="match status" value="1"/>
</dbReference>
<dbReference type="PANTHER" id="PTHR41536:SF1">
    <property type="entry name" value="PKHD-TYPE HYDROXYLASE YBIX"/>
    <property type="match status" value="1"/>
</dbReference>
<dbReference type="Pfam" id="PF13640">
    <property type="entry name" value="2OG-FeII_Oxy_3"/>
    <property type="match status" value="1"/>
</dbReference>
<dbReference type="Pfam" id="PF18331">
    <property type="entry name" value="PKHD_C"/>
    <property type="match status" value="1"/>
</dbReference>
<dbReference type="SMART" id="SM00702">
    <property type="entry name" value="P4Hc"/>
    <property type="match status" value="1"/>
</dbReference>
<dbReference type="SUPFAM" id="SSF51197">
    <property type="entry name" value="Clavaminate synthase-like"/>
    <property type="match status" value="1"/>
</dbReference>
<dbReference type="PROSITE" id="PS51471">
    <property type="entry name" value="FE2OG_OXY"/>
    <property type="match status" value="1"/>
</dbReference>
<name>Y292_PHEZH</name>
<organism>
    <name type="scientific">Phenylobacterium zucineum (strain HLK1)</name>
    <dbReference type="NCBI Taxonomy" id="450851"/>
    <lineage>
        <taxon>Bacteria</taxon>
        <taxon>Pseudomonadati</taxon>
        <taxon>Pseudomonadota</taxon>
        <taxon>Alphaproteobacteria</taxon>
        <taxon>Caulobacterales</taxon>
        <taxon>Caulobacteraceae</taxon>
        <taxon>Phenylobacterium</taxon>
    </lineage>
</organism>
<proteinExistence type="inferred from homology"/>
<reference key="1">
    <citation type="journal article" date="2008" name="BMC Genomics">
        <title>Complete genome of Phenylobacterium zucineum - a novel facultative intracellular bacterium isolated from human erythroleukemia cell line K562.</title>
        <authorList>
            <person name="Luo Y."/>
            <person name="Xu X."/>
            <person name="Ding Z."/>
            <person name="Liu Z."/>
            <person name="Zhang B."/>
            <person name="Yan Z."/>
            <person name="Sun J."/>
            <person name="Hu S."/>
            <person name="Hu X."/>
        </authorList>
    </citation>
    <scope>NUCLEOTIDE SEQUENCE [LARGE SCALE GENOMIC DNA]</scope>
    <source>
        <strain>HLK1</strain>
    </source>
</reference>
<evidence type="ECO:0000255" key="1">
    <source>
        <dbReference type="HAMAP-Rule" id="MF_00657"/>
    </source>
</evidence>
<feature type="chain" id="PRO_1000131217" description="PKHD-type hydroxylase PHZ_c0292">
    <location>
        <begin position="1"/>
        <end position="227"/>
    </location>
</feature>
<feature type="domain" description="Fe2OG dioxygenase" evidence="1">
    <location>
        <begin position="78"/>
        <end position="178"/>
    </location>
</feature>
<feature type="binding site" evidence="1">
    <location>
        <position position="96"/>
    </location>
    <ligand>
        <name>Fe cation</name>
        <dbReference type="ChEBI" id="CHEBI:24875"/>
    </ligand>
</feature>
<feature type="binding site" evidence="1">
    <location>
        <position position="98"/>
    </location>
    <ligand>
        <name>Fe cation</name>
        <dbReference type="ChEBI" id="CHEBI:24875"/>
    </ligand>
</feature>
<feature type="binding site" evidence="1">
    <location>
        <position position="159"/>
    </location>
    <ligand>
        <name>Fe cation</name>
        <dbReference type="ChEBI" id="CHEBI:24875"/>
    </ligand>
</feature>
<feature type="binding site" evidence="1">
    <location>
        <position position="169"/>
    </location>
    <ligand>
        <name>2-oxoglutarate</name>
        <dbReference type="ChEBI" id="CHEBI:16810"/>
    </ligand>
</feature>
<keyword id="KW-0223">Dioxygenase</keyword>
<keyword id="KW-0408">Iron</keyword>
<keyword id="KW-0479">Metal-binding</keyword>
<keyword id="KW-0560">Oxidoreductase</keyword>
<keyword id="KW-1185">Reference proteome</keyword>
<keyword id="KW-0847">Vitamin C</keyword>
<comment type="cofactor">
    <cofactor evidence="1">
        <name>Fe(2+)</name>
        <dbReference type="ChEBI" id="CHEBI:29033"/>
    </cofactor>
    <text evidence="1">Binds 1 Fe(2+) ion per subunit.</text>
</comment>
<comment type="cofactor">
    <cofactor evidence="1">
        <name>L-ascorbate</name>
        <dbReference type="ChEBI" id="CHEBI:38290"/>
    </cofactor>
</comment>
<accession>B4RDA2</accession>
<gene>
    <name type="ordered locus">PHZ_c0292</name>
</gene>
<protein>
    <recommendedName>
        <fullName evidence="1">PKHD-type hydroxylase PHZ_c0292</fullName>
        <ecNumber evidence="1">1.14.11.-</ecNumber>
    </recommendedName>
</protein>